<keyword id="KW-0067">ATP-binding</keyword>
<keyword id="KW-0119">Carbohydrate metabolism</keyword>
<keyword id="KW-0963">Cytoplasm</keyword>
<keyword id="KW-0299">Galactose metabolism</keyword>
<keyword id="KW-0418">Kinase</keyword>
<keyword id="KW-0460">Magnesium</keyword>
<keyword id="KW-0479">Metal-binding</keyword>
<keyword id="KW-0547">Nucleotide-binding</keyword>
<keyword id="KW-0808">Transferase</keyword>
<reference key="1">
    <citation type="journal article" date="2010" name="PLoS Genet.">
        <title>Genome sequence of the plant growth promoting endophytic bacterium Enterobacter sp. 638.</title>
        <authorList>
            <person name="Taghavi S."/>
            <person name="van der Lelie D."/>
            <person name="Hoffman A."/>
            <person name="Zhang Y.B."/>
            <person name="Walla M.D."/>
            <person name="Vangronsveld J."/>
            <person name="Newman L."/>
            <person name="Monchy S."/>
        </authorList>
    </citation>
    <scope>NUCLEOTIDE SEQUENCE [LARGE SCALE GENOMIC DNA]</scope>
    <source>
        <strain>638</strain>
    </source>
</reference>
<sequence>MSLKDKTQSLFAETFGYPATHAIQAPGRVNLIGEHTDYNDGFVLPCAIDYQTVISCAKRDDRIVRVIAADYDNQTDEFSLDEPIVAHDTQQWSNYVRGVVKHLQMRNKGFGGADLVIAGNVPQGAGLSSSASLEVAVGTVFQQLYHLPLDGAQIALNGQEAENQFVGCNCGIMDQLISALGKKEHALLIDCRSLGTKAVPLPKGAAVVIINSNFKRTLVGSEYNTRREQCETGARFFQQPALRDVSLNEFNKVAHELDPVVTKRVRHVLTENARTVEAASALAQGDLKRMGELMAESHASMRDDFEITVPQIDTLVEIVKATIGDKGGVRMTGGGFGGCVVALIPEEWVPAVQDAVSQQYEAKTGIKETFYVCKPSQGAGQC</sequence>
<protein>
    <recommendedName>
        <fullName evidence="1">Galactokinase</fullName>
        <ecNumber evidence="1">2.7.1.6</ecNumber>
    </recommendedName>
    <alternativeName>
        <fullName evidence="1">Galactose kinase</fullName>
    </alternativeName>
</protein>
<organism>
    <name type="scientific">Enterobacter sp. (strain 638)</name>
    <dbReference type="NCBI Taxonomy" id="399742"/>
    <lineage>
        <taxon>Bacteria</taxon>
        <taxon>Pseudomonadati</taxon>
        <taxon>Pseudomonadota</taxon>
        <taxon>Gammaproteobacteria</taxon>
        <taxon>Enterobacterales</taxon>
        <taxon>Enterobacteriaceae</taxon>
        <taxon>Enterobacter</taxon>
    </lineage>
</organism>
<feature type="chain" id="PRO_1000059004" description="Galactokinase">
    <location>
        <begin position="1"/>
        <end position="382"/>
    </location>
</feature>
<feature type="active site" description="Proton acceptor" evidence="1">
    <location>
        <position position="174"/>
    </location>
</feature>
<feature type="binding site" evidence="1">
    <location>
        <begin position="34"/>
        <end position="37"/>
    </location>
    <ligand>
        <name>substrate</name>
    </ligand>
</feature>
<feature type="binding site" evidence="1">
    <location>
        <begin position="124"/>
        <end position="130"/>
    </location>
    <ligand>
        <name>ATP</name>
        <dbReference type="ChEBI" id="CHEBI:30616"/>
    </ligand>
</feature>
<feature type="binding site" evidence="1">
    <location>
        <position position="130"/>
    </location>
    <ligand>
        <name>Mg(2+)</name>
        <dbReference type="ChEBI" id="CHEBI:18420"/>
    </ligand>
</feature>
<feature type="binding site" evidence="1">
    <location>
        <position position="162"/>
    </location>
    <ligand>
        <name>Mg(2+)</name>
        <dbReference type="ChEBI" id="CHEBI:18420"/>
    </ligand>
</feature>
<feature type="binding site" evidence="1">
    <location>
        <position position="223"/>
    </location>
    <ligand>
        <name>substrate</name>
    </ligand>
</feature>
<feature type="site" description="Transition state stabilizer" evidence="1">
    <location>
        <position position="28"/>
    </location>
</feature>
<comment type="function">
    <text evidence="1">Catalyzes the transfer of the gamma-phosphate of ATP to D-galactose to form alpha-D-galactose-1-phosphate (Gal-1-P).</text>
</comment>
<comment type="catalytic activity">
    <reaction evidence="1">
        <text>alpha-D-galactose + ATP = alpha-D-galactose 1-phosphate + ADP + H(+)</text>
        <dbReference type="Rhea" id="RHEA:13553"/>
        <dbReference type="ChEBI" id="CHEBI:15378"/>
        <dbReference type="ChEBI" id="CHEBI:28061"/>
        <dbReference type="ChEBI" id="CHEBI:30616"/>
        <dbReference type="ChEBI" id="CHEBI:58336"/>
        <dbReference type="ChEBI" id="CHEBI:456216"/>
        <dbReference type="EC" id="2.7.1.6"/>
    </reaction>
</comment>
<comment type="pathway">
    <text evidence="1">Carbohydrate metabolism; galactose metabolism.</text>
</comment>
<comment type="subcellular location">
    <subcellularLocation>
        <location evidence="1">Cytoplasm</location>
    </subcellularLocation>
</comment>
<comment type="similarity">
    <text evidence="1">Belongs to the GHMP kinase family. GalK subfamily.</text>
</comment>
<dbReference type="EC" id="2.7.1.6" evidence="1"/>
<dbReference type="EMBL" id="CP000653">
    <property type="protein sequence ID" value="ABP59929.1"/>
    <property type="molecule type" value="Genomic_DNA"/>
</dbReference>
<dbReference type="RefSeq" id="WP_012016648.1">
    <property type="nucleotide sequence ID" value="NC_009436.1"/>
</dbReference>
<dbReference type="SMR" id="A4W899"/>
<dbReference type="STRING" id="399742.Ent638_1248"/>
<dbReference type="KEGG" id="ent:Ent638_1248"/>
<dbReference type="eggNOG" id="COG0153">
    <property type="taxonomic scope" value="Bacteria"/>
</dbReference>
<dbReference type="HOGENOM" id="CLU_017814_2_1_6"/>
<dbReference type="OrthoDB" id="250531at2"/>
<dbReference type="UniPathway" id="UPA00214"/>
<dbReference type="Proteomes" id="UP000000230">
    <property type="component" value="Chromosome"/>
</dbReference>
<dbReference type="GO" id="GO:0005829">
    <property type="term" value="C:cytosol"/>
    <property type="evidence" value="ECO:0007669"/>
    <property type="project" value="TreeGrafter"/>
</dbReference>
<dbReference type="GO" id="GO:0005524">
    <property type="term" value="F:ATP binding"/>
    <property type="evidence" value="ECO:0007669"/>
    <property type="project" value="UniProtKB-UniRule"/>
</dbReference>
<dbReference type="GO" id="GO:0004335">
    <property type="term" value="F:galactokinase activity"/>
    <property type="evidence" value="ECO:0007669"/>
    <property type="project" value="UniProtKB-UniRule"/>
</dbReference>
<dbReference type="GO" id="GO:0000287">
    <property type="term" value="F:magnesium ion binding"/>
    <property type="evidence" value="ECO:0007669"/>
    <property type="project" value="UniProtKB-UniRule"/>
</dbReference>
<dbReference type="GO" id="GO:0006012">
    <property type="term" value="P:galactose metabolic process"/>
    <property type="evidence" value="ECO:0007669"/>
    <property type="project" value="UniProtKB-UniRule"/>
</dbReference>
<dbReference type="FunFam" id="3.30.230.10:FF:000017">
    <property type="entry name" value="Galactokinase"/>
    <property type="match status" value="1"/>
</dbReference>
<dbReference type="FunFam" id="3.30.70.890:FF:000001">
    <property type="entry name" value="Galactokinase"/>
    <property type="match status" value="1"/>
</dbReference>
<dbReference type="Gene3D" id="3.30.230.10">
    <property type="match status" value="1"/>
</dbReference>
<dbReference type="Gene3D" id="3.30.70.890">
    <property type="entry name" value="GHMP kinase, C-terminal domain"/>
    <property type="match status" value="1"/>
</dbReference>
<dbReference type="HAMAP" id="MF_00246">
    <property type="entry name" value="Galactokinase"/>
    <property type="match status" value="1"/>
</dbReference>
<dbReference type="InterPro" id="IPR000705">
    <property type="entry name" value="Galactokinase"/>
</dbReference>
<dbReference type="InterPro" id="IPR022963">
    <property type="entry name" value="Galactokinase_bac"/>
</dbReference>
<dbReference type="InterPro" id="IPR019741">
    <property type="entry name" value="Galactokinase_CS"/>
</dbReference>
<dbReference type="InterPro" id="IPR019539">
    <property type="entry name" value="GalKase_N"/>
</dbReference>
<dbReference type="InterPro" id="IPR013750">
    <property type="entry name" value="GHMP_kinase_C_dom"/>
</dbReference>
<dbReference type="InterPro" id="IPR036554">
    <property type="entry name" value="GHMP_kinase_C_sf"/>
</dbReference>
<dbReference type="InterPro" id="IPR006204">
    <property type="entry name" value="GHMP_kinase_N_dom"/>
</dbReference>
<dbReference type="InterPro" id="IPR006203">
    <property type="entry name" value="GHMP_knse_ATP-bd_CS"/>
</dbReference>
<dbReference type="InterPro" id="IPR006206">
    <property type="entry name" value="Mevalonate/galactokinase"/>
</dbReference>
<dbReference type="InterPro" id="IPR020568">
    <property type="entry name" value="Ribosomal_Su5_D2-typ_SF"/>
</dbReference>
<dbReference type="InterPro" id="IPR014721">
    <property type="entry name" value="Ribsml_uS5_D2-typ_fold_subgr"/>
</dbReference>
<dbReference type="NCBIfam" id="TIGR00131">
    <property type="entry name" value="gal_kin"/>
    <property type="match status" value="1"/>
</dbReference>
<dbReference type="NCBIfam" id="NF003472">
    <property type="entry name" value="PRK05101.1"/>
    <property type="match status" value="1"/>
</dbReference>
<dbReference type="PANTHER" id="PTHR10457:SF7">
    <property type="entry name" value="GALACTOKINASE-RELATED"/>
    <property type="match status" value="1"/>
</dbReference>
<dbReference type="PANTHER" id="PTHR10457">
    <property type="entry name" value="MEVALONATE KINASE/GALACTOKINASE"/>
    <property type="match status" value="1"/>
</dbReference>
<dbReference type="Pfam" id="PF10509">
    <property type="entry name" value="GalKase_gal_bdg"/>
    <property type="match status" value="1"/>
</dbReference>
<dbReference type="Pfam" id="PF08544">
    <property type="entry name" value="GHMP_kinases_C"/>
    <property type="match status" value="1"/>
</dbReference>
<dbReference type="Pfam" id="PF00288">
    <property type="entry name" value="GHMP_kinases_N"/>
    <property type="match status" value="1"/>
</dbReference>
<dbReference type="PIRSF" id="PIRSF000530">
    <property type="entry name" value="Galactokinase"/>
    <property type="match status" value="1"/>
</dbReference>
<dbReference type="PRINTS" id="PR00473">
    <property type="entry name" value="GALCTOKINASE"/>
</dbReference>
<dbReference type="PRINTS" id="PR00959">
    <property type="entry name" value="MEVGALKINASE"/>
</dbReference>
<dbReference type="SUPFAM" id="SSF55060">
    <property type="entry name" value="GHMP Kinase, C-terminal domain"/>
    <property type="match status" value="1"/>
</dbReference>
<dbReference type="SUPFAM" id="SSF54211">
    <property type="entry name" value="Ribosomal protein S5 domain 2-like"/>
    <property type="match status" value="1"/>
</dbReference>
<dbReference type="PROSITE" id="PS00106">
    <property type="entry name" value="GALACTOKINASE"/>
    <property type="match status" value="1"/>
</dbReference>
<dbReference type="PROSITE" id="PS00627">
    <property type="entry name" value="GHMP_KINASES_ATP"/>
    <property type="match status" value="1"/>
</dbReference>
<proteinExistence type="inferred from homology"/>
<accession>A4W899</accession>
<gene>
    <name evidence="1" type="primary">galK</name>
    <name type="ordered locus">Ent638_1248</name>
</gene>
<evidence type="ECO:0000255" key="1">
    <source>
        <dbReference type="HAMAP-Rule" id="MF_00246"/>
    </source>
</evidence>
<name>GAL1_ENT38</name>